<gene>
    <name evidence="1" type="primary">ligA</name>
    <name type="ordered locus">tll0857</name>
</gene>
<sequence>MVLKEPPAERIQQLRRLLQRASYAYYALDQPIMEDEVYDQLYRELQELEAAYPEYITPDSPTQRIGEAPVSQFESVSHRIPLYSLENAFTFADMVAWQERWQRYWRTLRQEEPLPPAEYVCELKMDGVALALTYENGLLVRGATRGDGQRGEDVTSNVRTIRPIPLRLALDNPPPVVEVRGEAFLPLERFHQLNQERQAQGEPPFANPRNAAAGTLRQLDPRIVAQRQLDFFAYALHLPEGGSVPLGENQAGEPQSQRQVLYALQHLGFRVNPHHADCPDLEAVKAYYDRWQTARHQLPYLTDGIVVKLNDLKLQQTLGFTQKFPRGSIAWKYEPEQAITDVLAITVQVGRTGALTPVAELAPVQLAGTTVSRATLHNADYIAELDLHIGDKVVIHKAGEIIPEIVRVFPELRPPTARPFTMPTACPECHQPVVRPANEAVSRCGNPRCPAIVRGQIRHWASRDALDIQGLGEKLVQQLVTKELVRTPADLYRLTAAQLLSLERMGQKSADKLLVAIANSKQQPWPRVLYGLGIRHVGSVNAQLLADRFKSVEELATATVADLCGVDGIGEEIAQAVQEWFQDPDHQSLIADLQALGLQLAAALHPAQKALTTEKSLNGKRFVITGTLPTLTREQAKALIQKHGGHVSESVSRQTDYLVVGEKAGSKLRRAQELGIPCINETELIQMCR</sequence>
<protein>
    <recommendedName>
        <fullName evidence="1">DNA ligase</fullName>
        <ecNumber evidence="1">6.5.1.2</ecNumber>
    </recommendedName>
    <alternativeName>
        <fullName evidence="1">Polydeoxyribonucleotide synthase [NAD(+)]</fullName>
    </alternativeName>
</protein>
<keyword id="KW-0227">DNA damage</keyword>
<keyword id="KW-0234">DNA repair</keyword>
<keyword id="KW-0235">DNA replication</keyword>
<keyword id="KW-0436">Ligase</keyword>
<keyword id="KW-0460">Magnesium</keyword>
<keyword id="KW-0464">Manganese</keyword>
<keyword id="KW-0479">Metal-binding</keyword>
<keyword id="KW-0520">NAD</keyword>
<keyword id="KW-1185">Reference proteome</keyword>
<keyword id="KW-0862">Zinc</keyword>
<evidence type="ECO:0000255" key="1">
    <source>
        <dbReference type="HAMAP-Rule" id="MF_01588"/>
    </source>
</evidence>
<dbReference type="EC" id="6.5.1.2" evidence="1"/>
<dbReference type="EMBL" id="BA000039">
    <property type="protein sequence ID" value="BAC08409.1"/>
    <property type="molecule type" value="Genomic_DNA"/>
</dbReference>
<dbReference type="RefSeq" id="NP_681647.1">
    <property type="nucleotide sequence ID" value="NC_004113.1"/>
</dbReference>
<dbReference type="RefSeq" id="WP_011056701.1">
    <property type="nucleotide sequence ID" value="NC_004113.1"/>
</dbReference>
<dbReference type="SMR" id="Q8DKK2"/>
<dbReference type="STRING" id="197221.gene:10747449"/>
<dbReference type="EnsemblBacteria" id="BAC08409">
    <property type="protein sequence ID" value="BAC08409"/>
    <property type="gene ID" value="BAC08409"/>
</dbReference>
<dbReference type="KEGG" id="tel:tll0857"/>
<dbReference type="PATRIC" id="fig|197221.4.peg.902"/>
<dbReference type="eggNOG" id="COG0272">
    <property type="taxonomic scope" value="Bacteria"/>
</dbReference>
<dbReference type="Proteomes" id="UP000000440">
    <property type="component" value="Chromosome"/>
</dbReference>
<dbReference type="GO" id="GO:0005829">
    <property type="term" value="C:cytosol"/>
    <property type="evidence" value="ECO:0007669"/>
    <property type="project" value="TreeGrafter"/>
</dbReference>
<dbReference type="GO" id="GO:0003677">
    <property type="term" value="F:DNA binding"/>
    <property type="evidence" value="ECO:0007669"/>
    <property type="project" value="InterPro"/>
</dbReference>
<dbReference type="GO" id="GO:0003911">
    <property type="term" value="F:DNA ligase (NAD+) activity"/>
    <property type="evidence" value="ECO:0007669"/>
    <property type="project" value="UniProtKB-UniRule"/>
</dbReference>
<dbReference type="GO" id="GO:0046872">
    <property type="term" value="F:metal ion binding"/>
    <property type="evidence" value="ECO:0007669"/>
    <property type="project" value="UniProtKB-KW"/>
</dbReference>
<dbReference type="GO" id="GO:0006281">
    <property type="term" value="P:DNA repair"/>
    <property type="evidence" value="ECO:0007669"/>
    <property type="project" value="UniProtKB-KW"/>
</dbReference>
<dbReference type="GO" id="GO:0006260">
    <property type="term" value="P:DNA replication"/>
    <property type="evidence" value="ECO:0007669"/>
    <property type="project" value="UniProtKB-KW"/>
</dbReference>
<dbReference type="CDD" id="cd17748">
    <property type="entry name" value="BRCT_DNA_ligase_like"/>
    <property type="match status" value="1"/>
</dbReference>
<dbReference type="CDD" id="cd00114">
    <property type="entry name" value="LIGANc"/>
    <property type="match status" value="1"/>
</dbReference>
<dbReference type="FunFam" id="1.10.150.20:FF:000006">
    <property type="entry name" value="DNA ligase"/>
    <property type="match status" value="1"/>
</dbReference>
<dbReference type="FunFam" id="1.10.150.20:FF:000007">
    <property type="entry name" value="DNA ligase"/>
    <property type="match status" value="1"/>
</dbReference>
<dbReference type="FunFam" id="2.40.50.140:FF:000012">
    <property type="entry name" value="DNA ligase"/>
    <property type="match status" value="1"/>
</dbReference>
<dbReference type="FunFam" id="3.30.470.30:FF:000001">
    <property type="entry name" value="DNA ligase"/>
    <property type="match status" value="1"/>
</dbReference>
<dbReference type="Gene3D" id="6.20.10.30">
    <property type="match status" value="1"/>
</dbReference>
<dbReference type="Gene3D" id="1.10.150.20">
    <property type="entry name" value="5' to 3' exonuclease, C-terminal subdomain"/>
    <property type="match status" value="2"/>
</dbReference>
<dbReference type="Gene3D" id="3.40.50.10190">
    <property type="entry name" value="BRCT domain"/>
    <property type="match status" value="1"/>
</dbReference>
<dbReference type="Gene3D" id="3.30.470.30">
    <property type="entry name" value="DNA ligase/mRNA capping enzyme"/>
    <property type="match status" value="1"/>
</dbReference>
<dbReference type="Gene3D" id="1.10.287.610">
    <property type="entry name" value="Helix hairpin bin"/>
    <property type="match status" value="1"/>
</dbReference>
<dbReference type="Gene3D" id="2.40.50.140">
    <property type="entry name" value="Nucleic acid-binding proteins"/>
    <property type="match status" value="1"/>
</dbReference>
<dbReference type="HAMAP" id="MF_01588">
    <property type="entry name" value="DNA_ligase_A"/>
    <property type="match status" value="1"/>
</dbReference>
<dbReference type="InterPro" id="IPR001357">
    <property type="entry name" value="BRCT_dom"/>
</dbReference>
<dbReference type="InterPro" id="IPR036420">
    <property type="entry name" value="BRCT_dom_sf"/>
</dbReference>
<dbReference type="InterPro" id="IPR041663">
    <property type="entry name" value="DisA/LigA_HHH"/>
</dbReference>
<dbReference type="InterPro" id="IPR001679">
    <property type="entry name" value="DNA_ligase"/>
</dbReference>
<dbReference type="InterPro" id="IPR018239">
    <property type="entry name" value="DNA_ligase_AS"/>
</dbReference>
<dbReference type="InterPro" id="IPR033136">
    <property type="entry name" value="DNA_ligase_CS"/>
</dbReference>
<dbReference type="InterPro" id="IPR013839">
    <property type="entry name" value="DNAligase_adenylation"/>
</dbReference>
<dbReference type="InterPro" id="IPR013840">
    <property type="entry name" value="DNAligase_N"/>
</dbReference>
<dbReference type="InterPro" id="IPR003583">
    <property type="entry name" value="Hlx-hairpin-Hlx_DNA-bd_motif"/>
</dbReference>
<dbReference type="InterPro" id="IPR012340">
    <property type="entry name" value="NA-bd_OB-fold"/>
</dbReference>
<dbReference type="InterPro" id="IPR004150">
    <property type="entry name" value="NAD_DNA_ligase_OB"/>
</dbReference>
<dbReference type="InterPro" id="IPR010994">
    <property type="entry name" value="RuvA_2-like"/>
</dbReference>
<dbReference type="InterPro" id="IPR004149">
    <property type="entry name" value="Znf_DNAligase_C4"/>
</dbReference>
<dbReference type="NCBIfam" id="TIGR00575">
    <property type="entry name" value="dnlj"/>
    <property type="match status" value="1"/>
</dbReference>
<dbReference type="NCBIfam" id="NF005932">
    <property type="entry name" value="PRK07956.1"/>
    <property type="match status" value="1"/>
</dbReference>
<dbReference type="PANTHER" id="PTHR23389">
    <property type="entry name" value="CHROMOSOME TRANSMISSION FIDELITY FACTOR 18"/>
    <property type="match status" value="1"/>
</dbReference>
<dbReference type="PANTHER" id="PTHR23389:SF9">
    <property type="entry name" value="DNA LIGASE"/>
    <property type="match status" value="1"/>
</dbReference>
<dbReference type="Pfam" id="PF00533">
    <property type="entry name" value="BRCT"/>
    <property type="match status" value="1"/>
</dbReference>
<dbReference type="Pfam" id="PF01653">
    <property type="entry name" value="DNA_ligase_aden"/>
    <property type="match status" value="1"/>
</dbReference>
<dbReference type="Pfam" id="PF03120">
    <property type="entry name" value="DNA_ligase_OB"/>
    <property type="match status" value="1"/>
</dbReference>
<dbReference type="Pfam" id="PF03119">
    <property type="entry name" value="DNA_ligase_ZBD"/>
    <property type="match status" value="1"/>
</dbReference>
<dbReference type="Pfam" id="PF12826">
    <property type="entry name" value="HHH_2"/>
    <property type="match status" value="1"/>
</dbReference>
<dbReference type="Pfam" id="PF14520">
    <property type="entry name" value="HHH_5"/>
    <property type="match status" value="1"/>
</dbReference>
<dbReference type="Pfam" id="PF22745">
    <property type="entry name" value="Nlig-Ia"/>
    <property type="match status" value="1"/>
</dbReference>
<dbReference type="PIRSF" id="PIRSF001604">
    <property type="entry name" value="LigA"/>
    <property type="match status" value="1"/>
</dbReference>
<dbReference type="SMART" id="SM00292">
    <property type="entry name" value="BRCT"/>
    <property type="match status" value="1"/>
</dbReference>
<dbReference type="SMART" id="SM00278">
    <property type="entry name" value="HhH1"/>
    <property type="match status" value="3"/>
</dbReference>
<dbReference type="SMART" id="SM00532">
    <property type="entry name" value="LIGANc"/>
    <property type="match status" value="1"/>
</dbReference>
<dbReference type="SUPFAM" id="SSF52113">
    <property type="entry name" value="BRCT domain"/>
    <property type="match status" value="1"/>
</dbReference>
<dbReference type="SUPFAM" id="SSF56091">
    <property type="entry name" value="DNA ligase/mRNA capping enzyme, catalytic domain"/>
    <property type="match status" value="1"/>
</dbReference>
<dbReference type="SUPFAM" id="SSF50249">
    <property type="entry name" value="Nucleic acid-binding proteins"/>
    <property type="match status" value="1"/>
</dbReference>
<dbReference type="SUPFAM" id="SSF47781">
    <property type="entry name" value="RuvA domain 2-like"/>
    <property type="match status" value="1"/>
</dbReference>
<dbReference type="PROSITE" id="PS50172">
    <property type="entry name" value="BRCT"/>
    <property type="match status" value="1"/>
</dbReference>
<dbReference type="PROSITE" id="PS01055">
    <property type="entry name" value="DNA_LIGASE_N1"/>
    <property type="match status" value="1"/>
</dbReference>
<dbReference type="PROSITE" id="PS01056">
    <property type="entry name" value="DNA_LIGASE_N2"/>
    <property type="match status" value="1"/>
</dbReference>
<feature type="chain" id="PRO_0000313477" description="DNA ligase">
    <location>
        <begin position="1"/>
        <end position="689"/>
    </location>
</feature>
<feature type="domain" description="BRCT" evidence="1">
    <location>
        <begin position="612"/>
        <end position="689"/>
    </location>
</feature>
<feature type="active site" description="N6-AMP-lysine intermediate" evidence="1">
    <location>
        <position position="124"/>
    </location>
</feature>
<feature type="binding site" evidence="1">
    <location>
        <begin position="35"/>
        <end position="39"/>
    </location>
    <ligand>
        <name>NAD(+)</name>
        <dbReference type="ChEBI" id="CHEBI:57540"/>
    </ligand>
</feature>
<feature type="binding site" evidence="1">
    <location>
        <begin position="84"/>
        <end position="85"/>
    </location>
    <ligand>
        <name>NAD(+)</name>
        <dbReference type="ChEBI" id="CHEBI:57540"/>
    </ligand>
</feature>
<feature type="binding site" evidence="1">
    <location>
        <position position="122"/>
    </location>
    <ligand>
        <name>NAD(+)</name>
        <dbReference type="ChEBI" id="CHEBI:57540"/>
    </ligand>
</feature>
<feature type="binding site" evidence="1">
    <location>
        <position position="145"/>
    </location>
    <ligand>
        <name>NAD(+)</name>
        <dbReference type="ChEBI" id="CHEBI:57540"/>
    </ligand>
</feature>
<feature type="binding site" evidence="1">
    <location>
        <position position="182"/>
    </location>
    <ligand>
        <name>NAD(+)</name>
        <dbReference type="ChEBI" id="CHEBI:57540"/>
    </ligand>
</feature>
<feature type="binding site" evidence="1">
    <location>
        <position position="308"/>
    </location>
    <ligand>
        <name>NAD(+)</name>
        <dbReference type="ChEBI" id="CHEBI:57540"/>
    </ligand>
</feature>
<feature type="binding site" evidence="1">
    <location>
        <position position="332"/>
    </location>
    <ligand>
        <name>NAD(+)</name>
        <dbReference type="ChEBI" id="CHEBI:57540"/>
    </ligand>
</feature>
<feature type="binding site" evidence="1">
    <location>
        <position position="426"/>
    </location>
    <ligand>
        <name>Zn(2+)</name>
        <dbReference type="ChEBI" id="CHEBI:29105"/>
    </ligand>
</feature>
<feature type="binding site" evidence="1">
    <location>
        <position position="429"/>
    </location>
    <ligand>
        <name>Zn(2+)</name>
        <dbReference type="ChEBI" id="CHEBI:29105"/>
    </ligand>
</feature>
<feature type="binding site" evidence="1">
    <location>
        <position position="444"/>
    </location>
    <ligand>
        <name>Zn(2+)</name>
        <dbReference type="ChEBI" id="CHEBI:29105"/>
    </ligand>
</feature>
<feature type="binding site" evidence="1">
    <location>
        <position position="449"/>
    </location>
    <ligand>
        <name>Zn(2+)</name>
        <dbReference type="ChEBI" id="CHEBI:29105"/>
    </ligand>
</feature>
<accession>Q8DKK2</accession>
<comment type="function">
    <text evidence="1">DNA ligase that catalyzes the formation of phosphodiester linkages between 5'-phosphoryl and 3'-hydroxyl groups in double-stranded DNA using NAD as a coenzyme and as the energy source for the reaction. It is essential for DNA replication and repair of damaged DNA.</text>
</comment>
<comment type="catalytic activity">
    <reaction evidence="1">
        <text>NAD(+) + (deoxyribonucleotide)n-3'-hydroxyl + 5'-phospho-(deoxyribonucleotide)m = (deoxyribonucleotide)n+m + AMP + beta-nicotinamide D-nucleotide.</text>
        <dbReference type="EC" id="6.5.1.2"/>
    </reaction>
</comment>
<comment type="cofactor">
    <cofactor evidence="1">
        <name>Mg(2+)</name>
        <dbReference type="ChEBI" id="CHEBI:18420"/>
    </cofactor>
    <cofactor evidence="1">
        <name>Mn(2+)</name>
        <dbReference type="ChEBI" id="CHEBI:29035"/>
    </cofactor>
</comment>
<comment type="similarity">
    <text evidence="1">Belongs to the NAD-dependent DNA ligase family. LigA subfamily.</text>
</comment>
<name>DNLJ_THEVB</name>
<reference key="1">
    <citation type="journal article" date="2002" name="DNA Res.">
        <title>Complete genome structure of the thermophilic cyanobacterium Thermosynechococcus elongatus BP-1.</title>
        <authorList>
            <person name="Nakamura Y."/>
            <person name="Kaneko T."/>
            <person name="Sato S."/>
            <person name="Ikeuchi M."/>
            <person name="Katoh H."/>
            <person name="Sasamoto S."/>
            <person name="Watanabe A."/>
            <person name="Iriguchi M."/>
            <person name="Kawashima K."/>
            <person name="Kimura T."/>
            <person name="Kishida Y."/>
            <person name="Kiyokawa C."/>
            <person name="Kohara M."/>
            <person name="Matsumoto M."/>
            <person name="Matsuno A."/>
            <person name="Nakazaki N."/>
            <person name="Shimpo S."/>
            <person name="Sugimoto M."/>
            <person name="Takeuchi C."/>
            <person name="Yamada M."/>
            <person name="Tabata S."/>
        </authorList>
    </citation>
    <scope>NUCLEOTIDE SEQUENCE [LARGE SCALE GENOMIC DNA]</scope>
    <source>
        <strain>NIES-2133 / IAM M-273 / BP-1</strain>
    </source>
</reference>
<organism>
    <name type="scientific">Thermosynechococcus vestitus (strain NIES-2133 / IAM M-273 / BP-1)</name>
    <dbReference type="NCBI Taxonomy" id="197221"/>
    <lineage>
        <taxon>Bacteria</taxon>
        <taxon>Bacillati</taxon>
        <taxon>Cyanobacteriota</taxon>
        <taxon>Cyanophyceae</taxon>
        <taxon>Acaryochloridales</taxon>
        <taxon>Thermosynechococcaceae</taxon>
        <taxon>Thermosynechococcus</taxon>
    </lineage>
</organism>
<proteinExistence type="inferred from homology"/>